<protein>
    <recommendedName>
        <fullName>Sugar phosphate exchanger 3</fullName>
    </recommendedName>
    <alternativeName>
        <fullName>Solute carrier family 37 member 3</fullName>
    </alternativeName>
</protein>
<feature type="chain" id="PRO_0000309279" description="Sugar phosphate exchanger 3">
    <location>
        <begin position="1"/>
        <end position="494"/>
    </location>
</feature>
<feature type="transmembrane region" description="Helical" evidence="2">
    <location>
        <begin position="10"/>
        <end position="30"/>
    </location>
</feature>
<feature type="transmembrane region" description="Helical" evidence="2">
    <location>
        <begin position="81"/>
        <end position="101"/>
    </location>
</feature>
<feature type="transmembrane region" description="Helical" evidence="2">
    <location>
        <begin position="113"/>
        <end position="133"/>
    </location>
</feature>
<feature type="transmembrane region" description="Helical" evidence="2">
    <location>
        <begin position="146"/>
        <end position="166"/>
    </location>
</feature>
<feature type="transmembrane region" description="Helical" evidence="2">
    <location>
        <begin position="177"/>
        <end position="197"/>
    </location>
</feature>
<feature type="transmembrane region" description="Helical" evidence="2">
    <location>
        <begin position="209"/>
        <end position="229"/>
    </location>
</feature>
<feature type="transmembrane region" description="Helical" evidence="2">
    <location>
        <begin position="297"/>
        <end position="317"/>
    </location>
</feature>
<feature type="transmembrane region" description="Helical" evidence="2">
    <location>
        <begin position="333"/>
        <end position="353"/>
    </location>
</feature>
<feature type="transmembrane region" description="Helical" evidence="2">
    <location>
        <begin position="357"/>
        <end position="377"/>
    </location>
</feature>
<feature type="transmembrane region" description="Helical" evidence="2">
    <location>
        <begin position="386"/>
        <end position="406"/>
    </location>
</feature>
<feature type="transmembrane region" description="Helical" evidence="2">
    <location>
        <begin position="428"/>
        <end position="448"/>
    </location>
</feature>
<feature type="transmembrane region" description="Helical" evidence="2">
    <location>
        <begin position="457"/>
        <end position="477"/>
    </location>
</feature>
<feature type="region of interest" description="Disordered" evidence="3">
    <location>
        <begin position="240"/>
        <end position="261"/>
    </location>
</feature>
<feature type="glycosylation site" description="N-linked (GlcNAc...) asparagine" evidence="2">
    <location>
        <position position="58"/>
    </location>
</feature>
<feature type="sequence conflict" description="In Ref. 2; AAH99673." evidence="5" ref="2">
    <original>A</original>
    <variation>T</variation>
    <location>
        <position position="197"/>
    </location>
</feature>
<feature type="sequence conflict" description="In Ref. 2; AAH99673." evidence="5" ref="2">
    <original>P</original>
    <variation>L</variation>
    <location>
        <position position="237"/>
    </location>
</feature>
<feature type="sequence conflict" description="In Ref. 1; BAC36258 and 2; AAH99673." evidence="5" ref="1 2">
    <original>W</original>
    <variation>G</variation>
    <location>
        <position position="369"/>
    </location>
</feature>
<feature type="sequence conflict" description="In Ref. 2; AAH99673." evidence="5" ref="2">
    <original>L</original>
    <variation>S</variation>
    <location>
        <position position="473"/>
    </location>
</feature>
<dbReference type="EMBL" id="AK076213">
    <property type="protein sequence ID" value="BAC36258.1"/>
    <property type="molecule type" value="mRNA"/>
</dbReference>
<dbReference type="EMBL" id="AK167716">
    <property type="protein sequence ID" value="BAE39758.1"/>
    <property type="molecule type" value="mRNA"/>
</dbReference>
<dbReference type="EMBL" id="BC099673">
    <property type="protein sequence ID" value="AAH99673.1"/>
    <property type="molecule type" value="mRNA"/>
</dbReference>
<dbReference type="CCDS" id="CCDS20020.1"/>
<dbReference type="RefSeq" id="NP_082399.3">
    <property type="nucleotide sequence ID" value="NM_028123.3"/>
</dbReference>
<dbReference type="RefSeq" id="XP_017177246.1">
    <property type="nucleotide sequence ID" value="XM_017321757.1"/>
</dbReference>
<dbReference type="RefSeq" id="XP_017177247.1">
    <property type="nucleotide sequence ID" value="XM_017321758.1"/>
</dbReference>
<dbReference type="RefSeq" id="XP_017177248.1">
    <property type="nucleotide sequence ID" value="XM_017321759.1"/>
</dbReference>
<dbReference type="SMR" id="Q3TIT8"/>
<dbReference type="FunCoup" id="Q3TIT8">
    <property type="interactions" value="395"/>
</dbReference>
<dbReference type="STRING" id="10090.ENSMUSP00000087709"/>
<dbReference type="GlyCosmos" id="Q3TIT8">
    <property type="glycosylation" value="1 site, No reported glycans"/>
</dbReference>
<dbReference type="GlyGen" id="Q3TIT8">
    <property type="glycosylation" value="1 site"/>
</dbReference>
<dbReference type="PaxDb" id="10090-ENSMUSP00000087709"/>
<dbReference type="ProteomicsDB" id="261644"/>
<dbReference type="DNASU" id="72144"/>
<dbReference type="GeneID" id="72144"/>
<dbReference type="KEGG" id="mmu:72144"/>
<dbReference type="UCSC" id="uc009bll.2">
    <property type="organism name" value="mouse"/>
</dbReference>
<dbReference type="AGR" id="MGI:1919394"/>
<dbReference type="CTD" id="84255"/>
<dbReference type="MGI" id="MGI:1919394">
    <property type="gene designation" value="Slc37a3"/>
</dbReference>
<dbReference type="eggNOG" id="KOG2533">
    <property type="taxonomic scope" value="Eukaryota"/>
</dbReference>
<dbReference type="InParanoid" id="Q3TIT8"/>
<dbReference type="OrthoDB" id="3639251at2759"/>
<dbReference type="PhylomeDB" id="Q3TIT8"/>
<dbReference type="TreeFam" id="TF314991"/>
<dbReference type="BioGRID-ORCS" id="72144">
    <property type="hits" value="3 hits in 78 CRISPR screens"/>
</dbReference>
<dbReference type="ChiTaRS" id="Slc37a3">
    <property type="organism name" value="mouse"/>
</dbReference>
<dbReference type="PRO" id="PR:Q3TIT8"/>
<dbReference type="Proteomes" id="UP000000589">
    <property type="component" value="Unplaced"/>
</dbReference>
<dbReference type="RNAct" id="Q3TIT8">
    <property type="molecule type" value="protein"/>
</dbReference>
<dbReference type="GO" id="GO:0005789">
    <property type="term" value="C:endoplasmic reticulum membrane"/>
    <property type="evidence" value="ECO:0000250"/>
    <property type="project" value="UniProtKB"/>
</dbReference>
<dbReference type="GO" id="GO:0005765">
    <property type="term" value="C:lysosomal membrane"/>
    <property type="evidence" value="ECO:0000314"/>
    <property type="project" value="UniProtKB"/>
</dbReference>
<dbReference type="GO" id="GO:0042910">
    <property type="term" value="F:xenobiotic transmembrane transporter activity"/>
    <property type="evidence" value="ECO:0000314"/>
    <property type="project" value="UniProtKB"/>
</dbReference>
<dbReference type="GO" id="GO:0006855">
    <property type="term" value="P:xenobiotic transmembrane transport"/>
    <property type="evidence" value="ECO:0000314"/>
    <property type="project" value="UniProtKB"/>
</dbReference>
<dbReference type="CDD" id="cd17342">
    <property type="entry name" value="MFS_SLC37A3"/>
    <property type="match status" value="1"/>
</dbReference>
<dbReference type="FunFam" id="1.20.1250.20:FF:000028">
    <property type="entry name" value="Sugar phosphate exchanger 3 isoform 1"/>
    <property type="match status" value="1"/>
</dbReference>
<dbReference type="FunFam" id="1.20.1250.20:FF:000132">
    <property type="entry name" value="sugar phosphate exchanger 3 isoform X1"/>
    <property type="match status" value="1"/>
</dbReference>
<dbReference type="Gene3D" id="1.20.1250.20">
    <property type="entry name" value="MFS general substrate transporter like domains"/>
    <property type="match status" value="2"/>
</dbReference>
<dbReference type="InterPro" id="IPR011701">
    <property type="entry name" value="MFS"/>
</dbReference>
<dbReference type="InterPro" id="IPR020846">
    <property type="entry name" value="MFS_dom"/>
</dbReference>
<dbReference type="InterPro" id="IPR036259">
    <property type="entry name" value="MFS_trans_sf"/>
</dbReference>
<dbReference type="InterPro" id="IPR000849">
    <property type="entry name" value="Sugar_P_transporter"/>
</dbReference>
<dbReference type="PANTHER" id="PTHR43184">
    <property type="entry name" value="MAJOR FACILITATOR SUPERFAMILY TRANSPORTER 16, ISOFORM B"/>
    <property type="match status" value="1"/>
</dbReference>
<dbReference type="PANTHER" id="PTHR43184:SF12">
    <property type="entry name" value="SUGAR PHOSPHATE EXCHANGER 3"/>
    <property type="match status" value="1"/>
</dbReference>
<dbReference type="Pfam" id="PF07690">
    <property type="entry name" value="MFS_1"/>
    <property type="match status" value="1"/>
</dbReference>
<dbReference type="PIRSF" id="PIRSF002808">
    <property type="entry name" value="Hexose_phosphate_transp"/>
    <property type="match status" value="1"/>
</dbReference>
<dbReference type="SUPFAM" id="SSF103473">
    <property type="entry name" value="MFS general substrate transporter"/>
    <property type="match status" value="1"/>
</dbReference>
<dbReference type="PROSITE" id="PS50850">
    <property type="entry name" value="MFS"/>
    <property type="match status" value="1"/>
</dbReference>
<gene>
    <name type="primary">Slc37a3</name>
    <name type="synonym">Spx3</name>
</gene>
<name>SPX3_MOUSE</name>
<accession>Q3TIT8</accession>
<accession>Q4FZD9</accession>
<accession>Q8BVX2</accession>
<keyword id="KW-0256">Endoplasmic reticulum</keyword>
<keyword id="KW-0325">Glycoprotein</keyword>
<keyword id="KW-0458">Lysosome</keyword>
<keyword id="KW-0472">Membrane</keyword>
<keyword id="KW-1185">Reference proteome</keyword>
<keyword id="KW-0762">Sugar transport</keyword>
<keyword id="KW-0812">Transmembrane</keyword>
<keyword id="KW-1133">Transmembrane helix</keyword>
<keyword id="KW-0813">Transport</keyword>
<proteinExistence type="evidence at protein level"/>
<reference key="1">
    <citation type="journal article" date="2005" name="Science">
        <title>The transcriptional landscape of the mammalian genome.</title>
        <authorList>
            <person name="Carninci P."/>
            <person name="Kasukawa T."/>
            <person name="Katayama S."/>
            <person name="Gough J."/>
            <person name="Frith M.C."/>
            <person name="Maeda N."/>
            <person name="Oyama R."/>
            <person name="Ravasi T."/>
            <person name="Lenhard B."/>
            <person name="Wells C."/>
            <person name="Kodzius R."/>
            <person name="Shimokawa K."/>
            <person name="Bajic V.B."/>
            <person name="Brenner S.E."/>
            <person name="Batalov S."/>
            <person name="Forrest A.R."/>
            <person name="Zavolan M."/>
            <person name="Davis M.J."/>
            <person name="Wilming L.G."/>
            <person name="Aidinis V."/>
            <person name="Allen J.E."/>
            <person name="Ambesi-Impiombato A."/>
            <person name="Apweiler R."/>
            <person name="Aturaliya R.N."/>
            <person name="Bailey T.L."/>
            <person name="Bansal M."/>
            <person name="Baxter L."/>
            <person name="Beisel K.W."/>
            <person name="Bersano T."/>
            <person name="Bono H."/>
            <person name="Chalk A.M."/>
            <person name="Chiu K.P."/>
            <person name="Choudhary V."/>
            <person name="Christoffels A."/>
            <person name="Clutterbuck D.R."/>
            <person name="Crowe M.L."/>
            <person name="Dalla E."/>
            <person name="Dalrymple B.P."/>
            <person name="de Bono B."/>
            <person name="Della Gatta G."/>
            <person name="di Bernardo D."/>
            <person name="Down T."/>
            <person name="Engstrom P."/>
            <person name="Fagiolini M."/>
            <person name="Faulkner G."/>
            <person name="Fletcher C.F."/>
            <person name="Fukushima T."/>
            <person name="Furuno M."/>
            <person name="Futaki S."/>
            <person name="Gariboldi M."/>
            <person name="Georgii-Hemming P."/>
            <person name="Gingeras T.R."/>
            <person name="Gojobori T."/>
            <person name="Green R.E."/>
            <person name="Gustincich S."/>
            <person name="Harbers M."/>
            <person name="Hayashi Y."/>
            <person name="Hensch T.K."/>
            <person name="Hirokawa N."/>
            <person name="Hill D."/>
            <person name="Huminiecki L."/>
            <person name="Iacono M."/>
            <person name="Ikeo K."/>
            <person name="Iwama A."/>
            <person name="Ishikawa T."/>
            <person name="Jakt M."/>
            <person name="Kanapin A."/>
            <person name="Katoh M."/>
            <person name="Kawasawa Y."/>
            <person name="Kelso J."/>
            <person name="Kitamura H."/>
            <person name="Kitano H."/>
            <person name="Kollias G."/>
            <person name="Krishnan S.P."/>
            <person name="Kruger A."/>
            <person name="Kummerfeld S.K."/>
            <person name="Kurochkin I.V."/>
            <person name="Lareau L.F."/>
            <person name="Lazarevic D."/>
            <person name="Lipovich L."/>
            <person name="Liu J."/>
            <person name="Liuni S."/>
            <person name="McWilliam S."/>
            <person name="Madan Babu M."/>
            <person name="Madera M."/>
            <person name="Marchionni L."/>
            <person name="Matsuda H."/>
            <person name="Matsuzawa S."/>
            <person name="Miki H."/>
            <person name="Mignone F."/>
            <person name="Miyake S."/>
            <person name="Morris K."/>
            <person name="Mottagui-Tabar S."/>
            <person name="Mulder N."/>
            <person name="Nakano N."/>
            <person name="Nakauchi H."/>
            <person name="Ng P."/>
            <person name="Nilsson R."/>
            <person name="Nishiguchi S."/>
            <person name="Nishikawa S."/>
            <person name="Nori F."/>
            <person name="Ohara O."/>
            <person name="Okazaki Y."/>
            <person name="Orlando V."/>
            <person name="Pang K.C."/>
            <person name="Pavan W.J."/>
            <person name="Pavesi G."/>
            <person name="Pesole G."/>
            <person name="Petrovsky N."/>
            <person name="Piazza S."/>
            <person name="Reed J."/>
            <person name="Reid J.F."/>
            <person name="Ring B.Z."/>
            <person name="Ringwald M."/>
            <person name="Rost B."/>
            <person name="Ruan Y."/>
            <person name="Salzberg S.L."/>
            <person name="Sandelin A."/>
            <person name="Schneider C."/>
            <person name="Schoenbach C."/>
            <person name="Sekiguchi K."/>
            <person name="Semple C.A."/>
            <person name="Seno S."/>
            <person name="Sessa L."/>
            <person name="Sheng Y."/>
            <person name="Shibata Y."/>
            <person name="Shimada H."/>
            <person name="Shimada K."/>
            <person name="Silva D."/>
            <person name="Sinclair B."/>
            <person name="Sperling S."/>
            <person name="Stupka E."/>
            <person name="Sugiura K."/>
            <person name="Sultana R."/>
            <person name="Takenaka Y."/>
            <person name="Taki K."/>
            <person name="Tammoja K."/>
            <person name="Tan S.L."/>
            <person name="Tang S."/>
            <person name="Taylor M.S."/>
            <person name="Tegner J."/>
            <person name="Teichmann S.A."/>
            <person name="Ueda H.R."/>
            <person name="van Nimwegen E."/>
            <person name="Verardo R."/>
            <person name="Wei C.L."/>
            <person name="Yagi K."/>
            <person name="Yamanishi H."/>
            <person name="Zabarovsky E."/>
            <person name="Zhu S."/>
            <person name="Zimmer A."/>
            <person name="Hide W."/>
            <person name="Bult C."/>
            <person name="Grimmond S.M."/>
            <person name="Teasdale R.D."/>
            <person name="Liu E.T."/>
            <person name="Brusic V."/>
            <person name="Quackenbush J."/>
            <person name="Wahlestedt C."/>
            <person name="Mattick J.S."/>
            <person name="Hume D.A."/>
            <person name="Kai C."/>
            <person name="Sasaki D."/>
            <person name="Tomaru Y."/>
            <person name="Fukuda S."/>
            <person name="Kanamori-Katayama M."/>
            <person name="Suzuki M."/>
            <person name="Aoki J."/>
            <person name="Arakawa T."/>
            <person name="Iida J."/>
            <person name="Imamura K."/>
            <person name="Itoh M."/>
            <person name="Kato T."/>
            <person name="Kawaji H."/>
            <person name="Kawagashira N."/>
            <person name="Kawashima T."/>
            <person name="Kojima M."/>
            <person name="Kondo S."/>
            <person name="Konno H."/>
            <person name="Nakano K."/>
            <person name="Ninomiya N."/>
            <person name="Nishio T."/>
            <person name="Okada M."/>
            <person name="Plessy C."/>
            <person name="Shibata K."/>
            <person name="Shiraki T."/>
            <person name="Suzuki S."/>
            <person name="Tagami M."/>
            <person name="Waki K."/>
            <person name="Watahiki A."/>
            <person name="Okamura-Oho Y."/>
            <person name="Suzuki H."/>
            <person name="Kawai J."/>
            <person name="Hayashizaki Y."/>
        </authorList>
    </citation>
    <scope>NUCLEOTIDE SEQUENCE [LARGE SCALE MRNA]</scope>
    <source>
        <strain>C57BL/6J</strain>
        <tissue>Head</tissue>
        <tissue>Placenta</tissue>
    </source>
</reference>
<reference key="2">
    <citation type="journal article" date="2004" name="Genome Res.">
        <title>The status, quality, and expansion of the NIH full-length cDNA project: the Mammalian Gene Collection (MGC).</title>
        <authorList>
            <consortium name="The MGC Project Team"/>
        </authorList>
    </citation>
    <scope>NUCLEOTIDE SEQUENCE [LARGE SCALE MRNA]</scope>
    <source>
        <strain>NMRI</strain>
        <tissue>Mammary tumor</tissue>
    </source>
</reference>
<reference key="3">
    <citation type="journal article" date="2018" name="Elife">
        <title>Identification of a transporter complex responsible for the cytosolic entry of nitrogen-containing bisphosphonates.</title>
        <authorList>
            <person name="Yu Z."/>
            <person name="Surface L.E."/>
            <person name="Park C.Y."/>
            <person name="Horlbeck M.A."/>
            <person name="Wyant G.A."/>
            <person name="Abu-Remaileh M."/>
            <person name="Peterson T.R."/>
            <person name="Sabatini D.M."/>
            <person name="Weissman J.S."/>
            <person name="O'Shea E.K."/>
        </authorList>
    </citation>
    <scope>FUNCTION</scope>
    <scope>SUBCELLULAR LOCATION</scope>
    <scope>INTERACTION WITH ATRAID</scope>
    <scope>GLYCOSYLATION</scope>
</reference>
<evidence type="ECO:0000250" key="1">
    <source>
        <dbReference type="UniProtKB" id="Q8NCC5"/>
    </source>
</evidence>
<evidence type="ECO:0000255" key="2"/>
<evidence type="ECO:0000256" key="3">
    <source>
        <dbReference type="SAM" id="MobiDB-lite"/>
    </source>
</evidence>
<evidence type="ECO:0000269" key="4">
    <source>
    </source>
</evidence>
<evidence type="ECO:0000305" key="5"/>
<organism>
    <name type="scientific">Mus musculus</name>
    <name type="common">Mouse</name>
    <dbReference type="NCBI Taxonomy" id="10090"/>
    <lineage>
        <taxon>Eukaryota</taxon>
        <taxon>Metazoa</taxon>
        <taxon>Chordata</taxon>
        <taxon>Craniata</taxon>
        <taxon>Vertebrata</taxon>
        <taxon>Euteleostomi</taxon>
        <taxon>Mammalia</taxon>
        <taxon>Eutheria</taxon>
        <taxon>Euarchontoglires</taxon>
        <taxon>Glires</taxon>
        <taxon>Rodentia</taxon>
        <taxon>Myomorpha</taxon>
        <taxon>Muroidea</taxon>
        <taxon>Muridae</taxon>
        <taxon>Murinae</taxon>
        <taxon>Mus</taxon>
        <taxon>Mus</taxon>
    </lineage>
</organism>
<sequence length="494" mass="54553">MAWPRFLQRGALLTSFSHHHLAVFLLTFFSYSLLHASRKTFSNVKVSISKQWTPNAFNTSLDLPAEIWSSNHLFPSTEEATLFLGTLDTVFLFSYAVGLFISGIIGDRLNLRWVLSFGMCSSAFVVFVFGTLTEWLHFYNKWFYCGLWIVNGLLQSTGWPCVVAVMGNWFGKAGRGVVFGLWSACASVGNILGAFLASSVLQYGYEYAFLVTASVQFAGGIIIFFGLLVSPEEIGLPSIGAEESSEEDSQRPLIDGAENEDDYEPNYSIQEDRAVVQVKAISFHQACCLPGVIPYSLAYACLKLVNYSFFFWLPFYLSNNFGWKEAEADKLSIWYDVGGIIGGTLLGFISDVLQKRAPVLALSLFLAVWSLVGYSRSPNNKSINALLMTITGFFIGGPSNMVSSAISADLGRQELIQGNSEALATVTGIVDGTGSIGAAVGQYLVSLIQDNLGWMWVFYFFILMTSCTILFILPLIVREVFSLVQRRQAHSLNE</sequence>
<comment type="function">
    <text evidence="1 4">Unlike the other SLC37 members, lacks glucose-6-phosphate antiporter activity (By similarity). In osteoclasts, forms a transporter complex with ATRAID for nitrogen-containing-bisphophonates (N-BPs) required for releasing N-BP molecules that have trafficked to lysosomes through fluid-phase endocytosis into the cytosol (PubMed:29745899).</text>
</comment>
<comment type="subunit">
    <text evidence="4">Interacts with ATRAID; the interaction is direct and both proteins are mutually dependent for their stability.</text>
</comment>
<comment type="subcellular location">
    <subcellularLocation>
        <location evidence="1">Endoplasmic reticulum membrane</location>
        <topology evidence="2">Multi-pass membrane protein</topology>
    </subcellularLocation>
    <subcellularLocation>
        <location evidence="4">Lysosome membrane</location>
        <topology evidence="2">Multi-pass membrane protein</topology>
    </subcellularLocation>
</comment>
<comment type="PTM">
    <text evidence="4">Glycosylated.</text>
</comment>
<comment type="similarity">
    <text evidence="5">Belongs to the major facilitator superfamily. Organophosphate:Pi antiporter (OPA) (TC 2.A.1.4) family.</text>
</comment>